<evidence type="ECO:0000250" key="1"/>
<evidence type="ECO:0000255" key="2"/>
<evidence type="ECO:0000256" key="3">
    <source>
        <dbReference type="SAM" id="MobiDB-lite"/>
    </source>
</evidence>
<evidence type="ECO:0000305" key="4"/>
<keyword id="KW-0175">Coiled coil</keyword>
<keyword id="KW-0539">Nucleus</keyword>
<keyword id="KW-0653">Protein transport</keyword>
<keyword id="KW-1185">Reference proteome</keyword>
<keyword id="KW-0690">Ribosome biogenesis</keyword>
<keyword id="KW-0813">Transport</keyword>
<feature type="chain" id="PRO_0000287486" description="Protein SDA1 homolog">
    <location>
        <begin position="1"/>
        <end position="689"/>
    </location>
</feature>
<feature type="region of interest" description="Disordered" evidence="3">
    <location>
        <begin position="227"/>
        <end position="260"/>
    </location>
</feature>
<feature type="region of interest" description="Disordered" evidence="3">
    <location>
        <begin position="485"/>
        <end position="512"/>
    </location>
</feature>
<feature type="region of interest" description="Disordered" evidence="3">
    <location>
        <begin position="623"/>
        <end position="689"/>
    </location>
</feature>
<feature type="coiled-coil region" evidence="2">
    <location>
        <begin position="258"/>
        <end position="319"/>
    </location>
</feature>
<feature type="compositionally biased region" description="Acidic residues" evidence="3">
    <location>
        <begin position="492"/>
        <end position="512"/>
    </location>
</feature>
<feature type="compositionally biased region" description="Basic and acidic residues" evidence="3">
    <location>
        <begin position="670"/>
        <end position="681"/>
    </location>
</feature>
<dbReference type="EMBL" id="BC044283">
    <property type="protein sequence ID" value="AAH44283.1"/>
    <property type="status" value="ALT_TERM"/>
    <property type="molecule type" value="mRNA"/>
</dbReference>
<dbReference type="EMBL" id="BC070991">
    <property type="protein sequence ID" value="AAH70991.1"/>
    <property type="status" value="ALT_TERM"/>
    <property type="molecule type" value="mRNA"/>
</dbReference>
<dbReference type="EMBL" id="BC072064">
    <property type="protein sequence ID" value="AAH72064.1"/>
    <property type="status" value="ALT_TERM"/>
    <property type="molecule type" value="mRNA"/>
</dbReference>
<dbReference type="EMBL" id="BC097552">
    <property type="protein sequence ID" value="AAH97552.1"/>
    <property type="status" value="ALT_TERM"/>
    <property type="molecule type" value="mRNA"/>
</dbReference>
<dbReference type="EMBL" id="BC108827">
    <property type="protein sequence ID" value="AAI08828.1"/>
    <property type="molecule type" value="mRNA"/>
</dbReference>
<dbReference type="RefSeq" id="NP_001082492.1">
    <property type="nucleotide sequence ID" value="NM_001089023.1"/>
</dbReference>
<dbReference type="RefSeq" id="XP_018089948.1">
    <property type="nucleotide sequence ID" value="XM_018234459.1"/>
</dbReference>
<dbReference type="RefSeq" id="XP_018089951.1">
    <property type="nucleotide sequence ID" value="XM_018234462.1"/>
</dbReference>
<dbReference type="RefSeq" id="XP_018089957.1">
    <property type="nucleotide sequence ID" value="XM_018234468.1"/>
</dbReference>
<dbReference type="SMR" id="Q2VPG3"/>
<dbReference type="BioGRID" id="99838">
    <property type="interactions" value="2"/>
</dbReference>
<dbReference type="IntAct" id="Q2VPG3">
    <property type="interactions" value="1"/>
</dbReference>
<dbReference type="DNASU" id="398506"/>
<dbReference type="GeneID" id="398506"/>
<dbReference type="KEGG" id="xla:398506"/>
<dbReference type="AGR" id="Xenbase:XB-GENE-1008737"/>
<dbReference type="CTD" id="398506"/>
<dbReference type="Xenbase" id="XB-GENE-1008737">
    <property type="gene designation" value="sdad1.S"/>
</dbReference>
<dbReference type="OrthoDB" id="2196187at2759"/>
<dbReference type="Proteomes" id="UP000186698">
    <property type="component" value="Chromosome 1S"/>
</dbReference>
<dbReference type="Bgee" id="398506">
    <property type="expression patterns" value="Expressed in pancreas and 19 other cell types or tissues"/>
</dbReference>
<dbReference type="GO" id="GO:0005730">
    <property type="term" value="C:nucleolus"/>
    <property type="evidence" value="ECO:0000250"/>
    <property type="project" value="UniProtKB"/>
</dbReference>
<dbReference type="GO" id="GO:0015031">
    <property type="term" value="P:protein transport"/>
    <property type="evidence" value="ECO:0007669"/>
    <property type="project" value="UniProtKB-KW"/>
</dbReference>
<dbReference type="GO" id="GO:0042273">
    <property type="term" value="P:ribosomal large subunit biogenesis"/>
    <property type="evidence" value="ECO:0000318"/>
    <property type="project" value="GO_Central"/>
</dbReference>
<dbReference type="GO" id="GO:0000055">
    <property type="term" value="P:ribosomal large subunit export from nucleus"/>
    <property type="evidence" value="ECO:0000318"/>
    <property type="project" value="GO_Central"/>
</dbReference>
<dbReference type="InterPro" id="IPR016024">
    <property type="entry name" value="ARM-type_fold"/>
</dbReference>
<dbReference type="InterPro" id="IPR027312">
    <property type="entry name" value="Sda1"/>
</dbReference>
<dbReference type="InterPro" id="IPR048292">
    <property type="entry name" value="SDA1_C"/>
</dbReference>
<dbReference type="InterPro" id="IPR007949">
    <property type="entry name" value="SDA1_MD"/>
</dbReference>
<dbReference type="InterPro" id="IPR012977">
    <property type="entry name" value="SDA1_N"/>
</dbReference>
<dbReference type="PANTHER" id="PTHR12730">
    <property type="entry name" value="HSDA/SDA1-RELATED"/>
    <property type="match status" value="1"/>
</dbReference>
<dbReference type="PANTHER" id="PTHR12730:SF0">
    <property type="entry name" value="PROTEIN SDA1 HOMOLOG"/>
    <property type="match status" value="1"/>
</dbReference>
<dbReference type="Pfam" id="PF21638">
    <property type="entry name" value="SDA1_C"/>
    <property type="match status" value="1"/>
</dbReference>
<dbReference type="Pfam" id="PF05285">
    <property type="entry name" value="SDA1_dom"/>
    <property type="match status" value="1"/>
</dbReference>
<dbReference type="Pfam" id="PF08158">
    <property type="entry name" value="SDA1_HEAT"/>
    <property type="match status" value="1"/>
</dbReference>
<dbReference type="SUPFAM" id="SSF48371">
    <property type="entry name" value="ARM repeat"/>
    <property type="match status" value="1"/>
</dbReference>
<sequence length="689" mass="80077">MSGRNNNKLPTNLPQLQNLIKRDPASYREEFLQQYKHYLSVIEIFKLQPDKPNKDLSTLVMFMAQTAHCFQQYLEDFPEQLKSLLCTHHTVMDPDQRMTLCKALIMLRNKNLISPSVLLELFFELLRCQDKLLRKTLYTHIVTDIKNINAKHKNNKVNTTLQNFMYTMLRDNNAIAAKISLDVMIELYRRNIWNDAKTVNVITTACFSKVTKILVAALKFFLGKDEDEKKDSDSESEDEGPTARDLMVRYSTGKKNTKNKKKLDKAMKVLKKHKKKKRPEVFNFSAIHLVHDPQEFAEKLLKQLEASKERFEVKLMHMDLISRLVGIHELFLFNFYPFVQRFLQPHQREVTKILLYAAQATHHLVPPEISQSVLKTIANNFVTDRNSGEVMTVGINAIKEVTARCPLAMTEELLQDLAQYKTHRDKNVSMSARGLIQLFRSLNPDMLQKKFRGKPTEASKEARIHAYGELDAKDYIPGAEVLEVEQEKKEEPEEDDGWESASLSDDDEDGEWIDVHHSSDEEQQEMAEKIQAMPTEERIAKAATVSGSRLLTQEDFKKIRLAQLAKEMNNAPGKSMKRKNIEIDSDEEERSGELLSLRDIEHLHKKPKSDKETRLATVLAGRTDRKEFVRKKTKMNPHASSTNKEKKKNKNFMMMRYSQNIRSKKKRSFRDKQIALRDSLLKKRKRLMK</sequence>
<reference key="1">
    <citation type="submission" date="2005-11" db="EMBL/GenBank/DDBJ databases">
        <authorList>
            <consortium name="NIH - Xenopus Gene Collection (XGC) project"/>
        </authorList>
    </citation>
    <scope>NUCLEOTIDE SEQUENCE [LARGE SCALE MRNA]</scope>
    <source>
        <tissue>Embryo</tissue>
        <tissue>Ovary</tissue>
    </source>
</reference>
<protein>
    <recommendedName>
        <fullName>Protein SDA1 homolog</fullName>
    </recommendedName>
    <alternativeName>
        <fullName>SDA1 domain-containing protein 1</fullName>
    </alternativeName>
</protein>
<organism>
    <name type="scientific">Xenopus laevis</name>
    <name type="common">African clawed frog</name>
    <dbReference type="NCBI Taxonomy" id="8355"/>
    <lineage>
        <taxon>Eukaryota</taxon>
        <taxon>Metazoa</taxon>
        <taxon>Chordata</taxon>
        <taxon>Craniata</taxon>
        <taxon>Vertebrata</taxon>
        <taxon>Euteleostomi</taxon>
        <taxon>Amphibia</taxon>
        <taxon>Batrachia</taxon>
        <taxon>Anura</taxon>
        <taxon>Pipoidea</taxon>
        <taxon>Pipidae</taxon>
        <taxon>Xenopodinae</taxon>
        <taxon>Xenopus</taxon>
        <taxon>Xenopus</taxon>
    </lineage>
</organism>
<name>SDA1_XENLA</name>
<comment type="function">
    <text evidence="1">Required for 60S pre-ribosomal subunits export to the cytoplasm.</text>
</comment>
<comment type="subcellular location">
    <subcellularLocation>
        <location evidence="1">Nucleus</location>
        <location evidence="1">Nucleolus</location>
    </subcellularLocation>
</comment>
<comment type="similarity">
    <text evidence="4">Belongs to the SDA1 family.</text>
</comment>
<proteinExistence type="evidence at transcript level"/>
<gene>
    <name type="primary">sdad1</name>
</gene>
<accession>Q2VPG3</accession>
<accession>Q4V844</accession>
<accession>Q6IP54</accession>
<accession>Q7ZXR8</accession>